<evidence type="ECO:0000250" key="1"/>
<evidence type="ECO:0000305" key="2"/>
<reference key="1">
    <citation type="submission" date="2006-12" db="EMBL/GenBank/DDBJ databases">
        <title>Complete sequence of chromosome of Mycobacterium sp. KMS.</title>
        <authorList>
            <consortium name="US DOE Joint Genome Institute"/>
            <person name="Copeland A."/>
            <person name="Lucas S."/>
            <person name="Lapidus A."/>
            <person name="Barry K."/>
            <person name="Detter J.C."/>
            <person name="Glavina del Rio T."/>
            <person name="Hammon N."/>
            <person name="Israni S."/>
            <person name="Dalin E."/>
            <person name="Tice H."/>
            <person name="Pitluck S."/>
            <person name="Kiss H."/>
            <person name="Brettin T."/>
            <person name="Bruce D."/>
            <person name="Han C."/>
            <person name="Tapia R."/>
            <person name="Gilna P."/>
            <person name="Schmutz J."/>
            <person name="Larimer F."/>
            <person name="Land M."/>
            <person name="Hauser L."/>
            <person name="Kyrpides N."/>
            <person name="Mikhailova N."/>
            <person name="Miller C.D."/>
            <person name="Richardson P."/>
        </authorList>
    </citation>
    <scope>NUCLEOTIDE SEQUENCE [LARGE SCALE GENOMIC DNA]</scope>
    <source>
        <strain>KMS</strain>
    </source>
</reference>
<comment type="function">
    <text evidence="1">Sigma factors are initiation factors that promote the attachment of RNA polymerase to specific initiation sites and are then released. Extracytoplasmic function (ECF) sigma factors are held in an inactive form by an anti-sigma factor until released by regulated intramembrane proteolysis (By similarity).</text>
</comment>
<comment type="subunit">
    <text evidence="1">Interacts transiently with the RNA polymerase catalytic core formed by RpoA, RpoB, RpoC and RpoZ (2 alpha, 1 beta, 1 beta' and 1 omega subunit) to form the RNA polymerase holoenzyme that can initiate transcription. Interacts (via sigma-70 factor domain 4) with anti-sigma-K factor RskA (By similarity).</text>
</comment>
<comment type="domain">
    <text evidence="1">The sigma-70 factor domain-2 mediates sequence-specific interaction with the -10 element in promoter DNA, and plays an important role in melting the double-stranded DNA and the formation of the transcription bubble. The sigma-70 factor domain-2 mediates interaction with the RNA polymerase subunits RpoB and RpoC (By similarity).</text>
</comment>
<comment type="domain">
    <text evidence="1">The sigma-70 factor domain-4 contains a helix-turn-helix (H-T-H) motif that mediates interaction with the -35 element in promoter DNA. The domain also mediates interaction with the RNA polymerase subunit RpoA. Interactions between sigma-70 factor domain-4 and anti-sigma factors prevents interaction of sigma factors with the RNA polymerase catalytic core (By similarity).</text>
</comment>
<comment type="miscellaneous">
    <text evidence="1">Extracytoplasmic function (ECF) sigma factors are held in an inactive form by an anti-sigma factor until released by regulated intramembrane proteolysis (RIP). RIP occurs when an extracytoplasmic signal triggers a concerted proteolytic cascade to transmit information and elicit cellular responses. The membrane-spanning anti-sigma factor is first cut extracytoplasmically (site-1 protease, S1P), then within the membrane itself (site-2 protease, S2P, Rip1), while cytoplasmic proteases finish degrading the regulatory protein, liberating SigK (By similarity).</text>
</comment>
<comment type="similarity">
    <text evidence="2">Belongs to the sigma-70 factor family. ECF subfamily.</text>
</comment>
<gene>
    <name type="primary">sigK</name>
    <name type="ordered locus">Mkms_4458</name>
</gene>
<name>SIGK_MYCSK</name>
<dbReference type="EMBL" id="CP000518">
    <property type="protein sequence ID" value="ABL93649.1"/>
    <property type="molecule type" value="Genomic_DNA"/>
</dbReference>
<dbReference type="SMR" id="A1ULE1"/>
<dbReference type="STRING" id="189918.Mkms_4458"/>
<dbReference type="KEGG" id="mkm:Mkms_4458"/>
<dbReference type="HOGENOM" id="CLU_047691_9_3_11"/>
<dbReference type="OrthoDB" id="9784272at2"/>
<dbReference type="GO" id="GO:0003677">
    <property type="term" value="F:DNA binding"/>
    <property type="evidence" value="ECO:0007669"/>
    <property type="project" value="UniProtKB-KW"/>
</dbReference>
<dbReference type="GO" id="GO:0016987">
    <property type="term" value="F:sigma factor activity"/>
    <property type="evidence" value="ECO:0007669"/>
    <property type="project" value="UniProtKB-KW"/>
</dbReference>
<dbReference type="GO" id="GO:0006352">
    <property type="term" value="P:DNA-templated transcription initiation"/>
    <property type="evidence" value="ECO:0007669"/>
    <property type="project" value="InterPro"/>
</dbReference>
<dbReference type="CDD" id="cd06171">
    <property type="entry name" value="Sigma70_r4"/>
    <property type="match status" value="1"/>
</dbReference>
<dbReference type="Gene3D" id="1.10.1740.10">
    <property type="match status" value="1"/>
</dbReference>
<dbReference type="Gene3D" id="1.10.10.10">
    <property type="entry name" value="Winged helix-like DNA-binding domain superfamily/Winged helix DNA-binding domain"/>
    <property type="match status" value="1"/>
</dbReference>
<dbReference type="InterPro" id="IPR039425">
    <property type="entry name" value="RNA_pol_sigma-70-like"/>
</dbReference>
<dbReference type="InterPro" id="IPR014284">
    <property type="entry name" value="RNA_pol_sigma-70_dom"/>
</dbReference>
<dbReference type="InterPro" id="IPR007627">
    <property type="entry name" value="RNA_pol_sigma70_r2"/>
</dbReference>
<dbReference type="InterPro" id="IPR007630">
    <property type="entry name" value="RNA_pol_sigma70_r4"/>
</dbReference>
<dbReference type="InterPro" id="IPR013325">
    <property type="entry name" value="RNA_pol_sigma_r2"/>
</dbReference>
<dbReference type="InterPro" id="IPR013324">
    <property type="entry name" value="RNA_pol_sigma_r3/r4-like"/>
</dbReference>
<dbReference type="InterPro" id="IPR036388">
    <property type="entry name" value="WH-like_DNA-bd_sf"/>
</dbReference>
<dbReference type="NCBIfam" id="NF007228">
    <property type="entry name" value="PRK09646.1"/>
    <property type="match status" value="1"/>
</dbReference>
<dbReference type="NCBIfam" id="TIGR02937">
    <property type="entry name" value="sigma70-ECF"/>
    <property type="match status" value="1"/>
</dbReference>
<dbReference type="PANTHER" id="PTHR43133:SF66">
    <property type="entry name" value="ECF RNA POLYMERASE SIGMA FACTOR SIGK"/>
    <property type="match status" value="1"/>
</dbReference>
<dbReference type="PANTHER" id="PTHR43133">
    <property type="entry name" value="RNA POLYMERASE ECF-TYPE SIGMA FACTO"/>
    <property type="match status" value="1"/>
</dbReference>
<dbReference type="Pfam" id="PF04542">
    <property type="entry name" value="Sigma70_r2"/>
    <property type="match status" value="1"/>
</dbReference>
<dbReference type="Pfam" id="PF04545">
    <property type="entry name" value="Sigma70_r4"/>
    <property type="match status" value="1"/>
</dbReference>
<dbReference type="SUPFAM" id="SSF88946">
    <property type="entry name" value="Sigma2 domain of RNA polymerase sigma factors"/>
    <property type="match status" value="1"/>
</dbReference>
<dbReference type="SUPFAM" id="SSF88659">
    <property type="entry name" value="Sigma3 and sigma4 domains of RNA polymerase sigma factors"/>
    <property type="match status" value="1"/>
</dbReference>
<feature type="chain" id="PRO_0000313842" description="ECF RNA polymerase sigma factor SigK">
    <location>
        <begin position="1"/>
        <end position="193"/>
    </location>
</feature>
<feature type="DNA-binding region" description="H-T-H motif" evidence="1">
    <location>
        <begin position="161"/>
        <end position="180"/>
    </location>
</feature>
<feature type="region of interest" description="Sigma-70 factor domain-2">
    <location>
        <begin position="35"/>
        <end position="101"/>
    </location>
</feature>
<feature type="region of interest" description="Sigma-70 factor domain-4">
    <location>
        <begin position="140"/>
        <end position="187"/>
    </location>
</feature>
<feature type="short sequence motif" description="Polymerase core binding">
    <location>
        <begin position="59"/>
        <end position="62"/>
    </location>
</feature>
<protein>
    <recommendedName>
        <fullName>ECF RNA polymerase sigma factor SigK</fullName>
        <shortName>ECF sigma factor SigK</shortName>
    </recommendedName>
    <alternativeName>
        <fullName>Alternative RNA polymerase sigma factor SigK</fullName>
    </alternativeName>
    <alternativeName>
        <fullName>RNA polymerase sigma-K factor</fullName>
        <shortName>Sigma-K factor</shortName>
    </alternativeName>
</protein>
<keyword id="KW-0238">DNA-binding</keyword>
<keyword id="KW-0731">Sigma factor</keyword>
<keyword id="KW-0804">Transcription</keyword>
<keyword id="KW-0805">Transcription regulation</keyword>
<organism>
    <name type="scientific">Mycobacterium sp. (strain KMS)</name>
    <dbReference type="NCBI Taxonomy" id="189918"/>
    <lineage>
        <taxon>Bacteria</taxon>
        <taxon>Bacillati</taxon>
        <taxon>Actinomycetota</taxon>
        <taxon>Actinomycetes</taxon>
        <taxon>Mycobacteriales</taxon>
        <taxon>Mycobacteriaceae</taxon>
        <taxon>Mycobacterium</taxon>
    </lineage>
</organism>
<accession>A1ULE1</accession>
<sequence>MTALTQPVRLPFVTTDLDVLLRQVAERDVDAFAALYDRTRSRVYGMVTRVLRDPGYSEETTQDIYLQVWRSAGSYDPKAGSPMAWLLTLAHRRAVDRVRSEEAASQRESRYGAASVDPPVDHVADSVILLDERRRVVDCMGSLSDLQREAIQLAYYEGLTYVQVSERLSANLATIKSRMRGGIRGLKNCLGMS</sequence>
<proteinExistence type="inferred from homology"/>